<comment type="function">
    <text evidence="1">Probable DNA relaxase involved in the transfer of the integrative and conjugative element ICEBs1. Required for the transfer of ICEBs1. Probably mediates conjugation of ICEBs1 by nicking at oriT on the conjugative element and facilitates the translocation of a single strand of ICEBs1 DNA through a transmembrane conjugation pore into the recipient cell.</text>
</comment>
<comment type="miscellaneous">
    <text>The oriT nick site is located within the nicK open reading frame.</text>
</comment>
<comment type="similarity">
    <text evidence="2">Belongs to the plasmid replication initiation factor family.</text>
</comment>
<dbReference type="EMBL" id="AB001488">
    <property type="protein sequence ID" value="BAA19324.1"/>
    <property type="molecule type" value="Genomic_DNA"/>
</dbReference>
<dbReference type="EMBL" id="AL009126">
    <property type="protein sequence ID" value="CAB12294.1"/>
    <property type="molecule type" value="Genomic_DNA"/>
</dbReference>
<dbReference type="PIR" id="G69774">
    <property type="entry name" value="G69774"/>
</dbReference>
<dbReference type="RefSeq" id="NP_388368.1">
    <property type="nucleotide sequence ID" value="NC_000964.3"/>
</dbReference>
<dbReference type="RefSeq" id="WP_009966621.1">
    <property type="nucleotide sequence ID" value="NZ_OZ025638.1"/>
</dbReference>
<dbReference type="SMR" id="P96635"/>
<dbReference type="FunCoup" id="P96635">
    <property type="interactions" value="236"/>
</dbReference>
<dbReference type="STRING" id="224308.BSU04870"/>
<dbReference type="PaxDb" id="224308-BSU04870"/>
<dbReference type="EnsemblBacteria" id="CAB12294">
    <property type="protein sequence ID" value="CAB12294"/>
    <property type="gene ID" value="BSU_04870"/>
</dbReference>
<dbReference type="GeneID" id="939922"/>
<dbReference type="KEGG" id="bsu:BSU04870"/>
<dbReference type="PATRIC" id="fig|224308.179.peg.518"/>
<dbReference type="eggNOG" id="COG2946">
    <property type="taxonomic scope" value="Bacteria"/>
</dbReference>
<dbReference type="InParanoid" id="P96635"/>
<dbReference type="OrthoDB" id="2067664at2"/>
<dbReference type="PhylomeDB" id="P96635"/>
<dbReference type="BioCyc" id="BSUB:BSU04870-MONOMER"/>
<dbReference type="Proteomes" id="UP000001570">
    <property type="component" value="Chromosome"/>
</dbReference>
<dbReference type="GO" id="GO:0015074">
    <property type="term" value="P:DNA integration"/>
    <property type="evidence" value="ECO:0007669"/>
    <property type="project" value="UniProtKB-KW"/>
</dbReference>
<dbReference type="InterPro" id="IPR003491">
    <property type="entry name" value="REP-like_C"/>
</dbReference>
<dbReference type="InterPro" id="IPR040819">
    <property type="entry name" value="Rol_Rep_N"/>
</dbReference>
<dbReference type="Pfam" id="PF02486">
    <property type="entry name" value="Rep_trans"/>
    <property type="match status" value="1"/>
</dbReference>
<dbReference type="Pfam" id="PF18106">
    <property type="entry name" value="Rol_Rep_N"/>
    <property type="match status" value="1"/>
</dbReference>
<gene>
    <name type="primary">nicK</name>
    <name type="synonym">ydcR</name>
    <name type="ordered locus">BSU04870</name>
</gene>
<accession>P96635</accession>
<accession>Q797J7</accession>
<reference key="1">
    <citation type="submission" date="1997-03" db="EMBL/GenBank/DDBJ databases">
        <title>A 148 kbp sequence of the region between 35 and 47 degree of the Bacillus subtilis genome.</title>
        <authorList>
            <person name="Kasahara Y."/>
            <person name="Nakai S."/>
            <person name="Lee S."/>
            <person name="Sadaie Y."/>
            <person name="Ogasawara N."/>
        </authorList>
    </citation>
    <scope>NUCLEOTIDE SEQUENCE [GENOMIC DNA]</scope>
    <source>
        <strain>168</strain>
    </source>
</reference>
<reference key="2">
    <citation type="journal article" date="1997" name="Nature">
        <title>The complete genome sequence of the Gram-positive bacterium Bacillus subtilis.</title>
        <authorList>
            <person name="Kunst F."/>
            <person name="Ogasawara N."/>
            <person name="Moszer I."/>
            <person name="Albertini A.M."/>
            <person name="Alloni G."/>
            <person name="Azevedo V."/>
            <person name="Bertero M.G."/>
            <person name="Bessieres P."/>
            <person name="Bolotin A."/>
            <person name="Borchert S."/>
            <person name="Borriss R."/>
            <person name="Boursier L."/>
            <person name="Brans A."/>
            <person name="Braun M."/>
            <person name="Brignell S.C."/>
            <person name="Bron S."/>
            <person name="Brouillet S."/>
            <person name="Bruschi C.V."/>
            <person name="Caldwell B."/>
            <person name="Capuano V."/>
            <person name="Carter N.M."/>
            <person name="Choi S.-K."/>
            <person name="Codani J.-J."/>
            <person name="Connerton I.F."/>
            <person name="Cummings N.J."/>
            <person name="Daniel R.A."/>
            <person name="Denizot F."/>
            <person name="Devine K.M."/>
            <person name="Duesterhoeft A."/>
            <person name="Ehrlich S.D."/>
            <person name="Emmerson P.T."/>
            <person name="Entian K.-D."/>
            <person name="Errington J."/>
            <person name="Fabret C."/>
            <person name="Ferrari E."/>
            <person name="Foulger D."/>
            <person name="Fritz C."/>
            <person name="Fujita M."/>
            <person name="Fujita Y."/>
            <person name="Fuma S."/>
            <person name="Galizzi A."/>
            <person name="Galleron N."/>
            <person name="Ghim S.-Y."/>
            <person name="Glaser P."/>
            <person name="Goffeau A."/>
            <person name="Golightly E.J."/>
            <person name="Grandi G."/>
            <person name="Guiseppi G."/>
            <person name="Guy B.J."/>
            <person name="Haga K."/>
            <person name="Haiech J."/>
            <person name="Harwood C.R."/>
            <person name="Henaut A."/>
            <person name="Hilbert H."/>
            <person name="Holsappel S."/>
            <person name="Hosono S."/>
            <person name="Hullo M.-F."/>
            <person name="Itaya M."/>
            <person name="Jones L.-M."/>
            <person name="Joris B."/>
            <person name="Karamata D."/>
            <person name="Kasahara Y."/>
            <person name="Klaerr-Blanchard M."/>
            <person name="Klein C."/>
            <person name="Kobayashi Y."/>
            <person name="Koetter P."/>
            <person name="Koningstein G."/>
            <person name="Krogh S."/>
            <person name="Kumano M."/>
            <person name="Kurita K."/>
            <person name="Lapidus A."/>
            <person name="Lardinois S."/>
            <person name="Lauber J."/>
            <person name="Lazarevic V."/>
            <person name="Lee S.-M."/>
            <person name="Levine A."/>
            <person name="Liu H."/>
            <person name="Masuda S."/>
            <person name="Mauel C."/>
            <person name="Medigue C."/>
            <person name="Medina N."/>
            <person name="Mellado R.P."/>
            <person name="Mizuno M."/>
            <person name="Moestl D."/>
            <person name="Nakai S."/>
            <person name="Noback M."/>
            <person name="Noone D."/>
            <person name="O'Reilly M."/>
            <person name="Ogawa K."/>
            <person name="Ogiwara A."/>
            <person name="Oudega B."/>
            <person name="Park S.-H."/>
            <person name="Parro V."/>
            <person name="Pohl T.M."/>
            <person name="Portetelle D."/>
            <person name="Porwollik S."/>
            <person name="Prescott A.M."/>
            <person name="Presecan E."/>
            <person name="Pujic P."/>
            <person name="Purnelle B."/>
            <person name="Rapoport G."/>
            <person name="Rey M."/>
            <person name="Reynolds S."/>
            <person name="Rieger M."/>
            <person name="Rivolta C."/>
            <person name="Rocha E."/>
            <person name="Roche B."/>
            <person name="Rose M."/>
            <person name="Sadaie Y."/>
            <person name="Sato T."/>
            <person name="Scanlan E."/>
            <person name="Schleich S."/>
            <person name="Schroeter R."/>
            <person name="Scoffone F."/>
            <person name="Sekiguchi J."/>
            <person name="Sekowska A."/>
            <person name="Seror S.J."/>
            <person name="Serror P."/>
            <person name="Shin B.-S."/>
            <person name="Soldo B."/>
            <person name="Sorokin A."/>
            <person name="Tacconi E."/>
            <person name="Takagi T."/>
            <person name="Takahashi H."/>
            <person name="Takemaru K."/>
            <person name="Takeuchi M."/>
            <person name="Tamakoshi A."/>
            <person name="Tanaka T."/>
            <person name="Terpstra P."/>
            <person name="Tognoni A."/>
            <person name="Tosato V."/>
            <person name="Uchiyama S."/>
            <person name="Vandenbol M."/>
            <person name="Vannier F."/>
            <person name="Vassarotti A."/>
            <person name="Viari A."/>
            <person name="Wambutt R."/>
            <person name="Wedler E."/>
            <person name="Wedler H."/>
            <person name="Weitzenegger T."/>
            <person name="Winters P."/>
            <person name="Wipat A."/>
            <person name="Yamamoto H."/>
            <person name="Yamane K."/>
            <person name="Yasumoto K."/>
            <person name="Yata K."/>
            <person name="Yoshida K."/>
            <person name="Yoshikawa H.-F."/>
            <person name="Zumstein E."/>
            <person name="Yoshikawa H."/>
            <person name="Danchin A."/>
        </authorList>
    </citation>
    <scope>NUCLEOTIDE SEQUENCE [LARGE SCALE GENOMIC DNA]</scope>
    <source>
        <strain>168</strain>
    </source>
</reference>
<reference key="3">
    <citation type="journal article" date="2007" name="J. Bacteriol.">
        <title>Identification of the origin of transfer (oriT) and DNA relaxase required for conjugation of the integrative and conjugative element ICEBs1 of Bacillus subtilis.</title>
        <authorList>
            <person name="Lee C.A."/>
            <person name="Grossman A.D."/>
        </authorList>
    </citation>
    <scope>FUNCTION</scope>
</reference>
<protein>
    <recommendedName>
        <fullName>Putative DNA relaxase NicK</fullName>
    </recommendedName>
</protein>
<proteinExistence type="inferred from homology"/>
<sequence length="352" mass="40944">MDELKQPPHANRGVVIVKEKNEAVESPLVSMVDYIRVSFKTHDVDRIIEEVLHLSKDFMTEKQSGFYGYVGTYELDYIKVFYSAPDDNRGVLIEMSGQGCRQFESFLECRKKTWYDFFQDCMQQGGSFTRFDLAIDDKKTYFSIPELLKKAQKGECISRFRKSDFNGSFDLSDGITGGTTIYFGSKKSEAYLCFYEKNYEQAEKYNIPLEELGDWNRYELRLKNERAQVAIDALLKTKDLTLIAMQIINNYVRFVDADENITREHWKTSLFWSDFIGDVGRLPLYVKPQKDFYQKSRNWLRNSCAPTMKMVLEADEHLGKTDLSDMIAEAELADKHKKMLDVYMADVADMVV</sequence>
<evidence type="ECO:0000269" key="1">
    <source>
    </source>
</evidence>
<evidence type="ECO:0000305" key="2"/>
<feature type="chain" id="PRO_0000360071" description="Putative DNA relaxase NicK">
    <location>
        <begin position="1"/>
        <end position="352"/>
    </location>
</feature>
<keyword id="KW-0184">Conjugation</keyword>
<keyword id="KW-0229">DNA integration</keyword>
<keyword id="KW-1185">Reference proteome</keyword>
<name>NICK_BACSU</name>
<organism>
    <name type="scientific">Bacillus subtilis (strain 168)</name>
    <dbReference type="NCBI Taxonomy" id="224308"/>
    <lineage>
        <taxon>Bacteria</taxon>
        <taxon>Bacillati</taxon>
        <taxon>Bacillota</taxon>
        <taxon>Bacilli</taxon>
        <taxon>Bacillales</taxon>
        <taxon>Bacillaceae</taxon>
        <taxon>Bacillus</taxon>
    </lineage>
</organism>